<sequence length="387" mass="41992">MKALHFGAGNIGRGFIGKLLADAGAQLTFADVNQPLLDALNKRKSYQVNVVGEQARVEEVKNVSAVNSGSPEVVALIAEADIVTTAVGPQILARIAATVAQGLITRHQQGNTRPLNIIACENMVRGTSQLKQHVFAALSEDEQRWVEQHVGFVDSAVDRIVPPSEAGSTDILAVTVETFSEWIVDGTQFKGQPPEIVGMELTDNLMAFVERKLFTLNTGHAITAYLGQLAGHQTIRDAILDPAVRQTVKGAMEESGAVLIKRYAFDPQKHAAYINKILSRFENPYLHDDVERVGRQPLRKLSAGDRLIKPLLGTLEYQLPHDSLVTGIAAAMSYRSEQDPQAQELVTLLAQLGPKAALAQISDLPADSEVVEQAVSVYNAMQQKLAH</sequence>
<organism>
    <name type="scientific">Yersinia pseudotuberculosis serotype I (strain IP32953)</name>
    <dbReference type="NCBI Taxonomy" id="273123"/>
    <lineage>
        <taxon>Bacteria</taxon>
        <taxon>Pseudomonadati</taxon>
        <taxon>Pseudomonadota</taxon>
        <taxon>Gammaproteobacteria</taxon>
        <taxon>Enterobacterales</taxon>
        <taxon>Yersiniaceae</taxon>
        <taxon>Yersinia</taxon>
    </lineage>
</organism>
<name>MTLD_YERPS</name>
<gene>
    <name evidence="1" type="primary">mtlD</name>
    <name type="ordered locus">YPTB3919</name>
</gene>
<proteinExistence type="inferred from homology"/>
<dbReference type="EC" id="1.1.1.17" evidence="1"/>
<dbReference type="EMBL" id="BX936398">
    <property type="protein sequence ID" value="CAH23157.1"/>
    <property type="molecule type" value="Genomic_DNA"/>
</dbReference>
<dbReference type="RefSeq" id="WP_011193338.1">
    <property type="nucleotide sequence ID" value="NC_006155.1"/>
</dbReference>
<dbReference type="SMR" id="Q663V5"/>
<dbReference type="KEGG" id="ypo:BZ17_2662"/>
<dbReference type="KEGG" id="yps:YPTB3919"/>
<dbReference type="PATRIC" id="fig|273123.14.peg.2790"/>
<dbReference type="Proteomes" id="UP000001011">
    <property type="component" value="Chromosome"/>
</dbReference>
<dbReference type="GO" id="GO:0005829">
    <property type="term" value="C:cytosol"/>
    <property type="evidence" value="ECO:0007669"/>
    <property type="project" value="TreeGrafter"/>
</dbReference>
<dbReference type="GO" id="GO:0008926">
    <property type="term" value="F:mannitol-1-phosphate 5-dehydrogenase activity"/>
    <property type="evidence" value="ECO:0007669"/>
    <property type="project" value="UniProtKB-UniRule"/>
</dbReference>
<dbReference type="GO" id="GO:0019592">
    <property type="term" value="P:mannitol catabolic process"/>
    <property type="evidence" value="ECO:0007669"/>
    <property type="project" value="TreeGrafter"/>
</dbReference>
<dbReference type="FunFam" id="1.10.1040.10:FF:000009">
    <property type="entry name" value="Mannitol-1-phosphate 5-dehydrogenase"/>
    <property type="match status" value="1"/>
</dbReference>
<dbReference type="FunFam" id="3.40.50.720:FF:000075">
    <property type="entry name" value="Mannitol-1-phosphate 5-dehydrogenase"/>
    <property type="match status" value="1"/>
</dbReference>
<dbReference type="Gene3D" id="1.10.1040.10">
    <property type="entry name" value="N-(1-d-carboxylethyl)-l-norvaline Dehydrogenase, domain 2"/>
    <property type="match status" value="1"/>
</dbReference>
<dbReference type="Gene3D" id="3.40.50.720">
    <property type="entry name" value="NAD(P)-binding Rossmann-like Domain"/>
    <property type="match status" value="1"/>
</dbReference>
<dbReference type="HAMAP" id="MF_00196">
    <property type="entry name" value="Mannitol_dehydrog"/>
    <property type="match status" value="1"/>
</dbReference>
<dbReference type="InterPro" id="IPR008927">
    <property type="entry name" value="6-PGluconate_DH-like_C_sf"/>
</dbReference>
<dbReference type="InterPro" id="IPR013328">
    <property type="entry name" value="6PGD_dom2"/>
</dbReference>
<dbReference type="InterPro" id="IPR023028">
    <property type="entry name" value="Mannitol_1_phos_5_DH"/>
</dbReference>
<dbReference type="InterPro" id="IPR000669">
    <property type="entry name" value="Mannitol_DH"/>
</dbReference>
<dbReference type="InterPro" id="IPR013118">
    <property type="entry name" value="Mannitol_DH_C"/>
</dbReference>
<dbReference type="InterPro" id="IPR023027">
    <property type="entry name" value="Mannitol_DH_CS"/>
</dbReference>
<dbReference type="InterPro" id="IPR013131">
    <property type="entry name" value="Mannitol_DH_N"/>
</dbReference>
<dbReference type="InterPro" id="IPR036291">
    <property type="entry name" value="NAD(P)-bd_dom_sf"/>
</dbReference>
<dbReference type="NCBIfam" id="NF002646">
    <property type="entry name" value="PRK02318.1-2"/>
    <property type="match status" value="1"/>
</dbReference>
<dbReference type="NCBIfam" id="NF002647">
    <property type="entry name" value="PRK02318.1-3"/>
    <property type="match status" value="1"/>
</dbReference>
<dbReference type="NCBIfam" id="NF002650">
    <property type="entry name" value="PRK02318.2-2"/>
    <property type="match status" value="1"/>
</dbReference>
<dbReference type="NCBIfam" id="NF002652">
    <property type="entry name" value="PRK02318.2-5"/>
    <property type="match status" value="1"/>
</dbReference>
<dbReference type="PANTHER" id="PTHR30524:SF0">
    <property type="entry name" value="ALTRONATE OXIDOREDUCTASE-RELATED"/>
    <property type="match status" value="1"/>
</dbReference>
<dbReference type="PANTHER" id="PTHR30524">
    <property type="entry name" value="MANNITOL-1-PHOSPHATE 5-DEHYDROGENASE"/>
    <property type="match status" value="1"/>
</dbReference>
<dbReference type="Pfam" id="PF01232">
    <property type="entry name" value="Mannitol_dh"/>
    <property type="match status" value="1"/>
</dbReference>
<dbReference type="Pfam" id="PF08125">
    <property type="entry name" value="Mannitol_dh_C"/>
    <property type="match status" value="1"/>
</dbReference>
<dbReference type="PRINTS" id="PR00084">
    <property type="entry name" value="MTLDHDRGNASE"/>
</dbReference>
<dbReference type="SUPFAM" id="SSF48179">
    <property type="entry name" value="6-phosphogluconate dehydrogenase C-terminal domain-like"/>
    <property type="match status" value="1"/>
</dbReference>
<dbReference type="SUPFAM" id="SSF51735">
    <property type="entry name" value="NAD(P)-binding Rossmann-fold domains"/>
    <property type="match status" value="1"/>
</dbReference>
<dbReference type="PROSITE" id="PS00974">
    <property type="entry name" value="MANNITOL_DHGENASE"/>
    <property type="match status" value="1"/>
</dbReference>
<accession>Q663V5</accession>
<keyword id="KW-0520">NAD</keyword>
<keyword id="KW-0560">Oxidoreductase</keyword>
<reference key="1">
    <citation type="journal article" date="2004" name="Proc. Natl. Acad. Sci. U.S.A.">
        <title>Insights into the evolution of Yersinia pestis through whole-genome comparison with Yersinia pseudotuberculosis.</title>
        <authorList>
            <person name="Chain P.S.G."/>
            <person name="Carniel E."/>
            <person name="Larimer F.W."/>
            <person name="Lamerdin J."/>
            <person name="Stoutland P.O."/>
            <person name="Regala W.M."/>
            <person name="Georgescu A.M."/>
            <person name="Vergez L.M."/>
            <person name="Land M.L."/>
            <person name="Motin V.L."/>
            <person name="Brubaker R.R."/>
            <person name="Fowler J."/>
            <person name="Hinnebusch J."/>
            <person name="Marceau M."/>
            <person name="Medigue C."/>
            <person name="Simonet M."/>
            <person name="Chenal-Francisque V."/>
            <person name="Souza B."/>
            <person name="Dacheux D."/>
            <person name="Elliott J.M."/>
            <person name="Derbise A."/>
            <person name="Hauser L.J."/>
            <person name="Garcia E."/>
        </authorList>
    </citation>
    <scope>NUCLEOTIDE SEQUENCE [LARGE SCALE GENOMIC DNA]</scope>
    <source>
        <strain>IP32953</strain>
    </source>
</reference>
<comment type="catalytic activity">
    <reaction evidence="1">
        <text>D-mannitol 1-phosphate + NAD(+) = beta-D-fructose 6-phosphate + NADH + H(+)</text>
        <dbReference type="Rhea" id="RHEA:19661"/>
        <dbReference type="ChEBI" id="CHEBI:15378"/>
        <dbReference type="ChEBI" id="CHEBI:57540"/>
        <dbReference type="ChEBI" id="CHEBI:57634"/>
        <dbReference type="ChEBI" id="CHEBI:57945"/>
        <dbReference type="ChEBI" id="CHEBI:61381"/>
        <dbReference type="EC" id="1.1.1.17"/>
    </reaction>
</comment>
<comment type="similarity">
    <text evidence="1">Belongs to the mannitol dehydrogenase family.</text>
</comment>
<feature type="chain" id="PRO_1000011824" description="Mannitol-1-phosphate 5-dehydrogenase">
    <location>
        <begin position="1"/>
        <end position="387"/>
    </location>
</feature>
<feature type="binding site" evidence="1">
    <location>
        <begin position="3"/>
        <end position="14"/>
    </location>
    <ligand>
        <name>NAD(+)</name>
        <dbReference type="ChEBI" id="CHEBI:57540"/>
    </ligand>
</feature>
<evidence type="ECO:0000255" key="1">
    <source>
        <dbReference type="HAMAP-Rule" id="MF_00196"/>
    </source>
</evidence>
<protein>
    <recommendedName>
        <fullName evidence="1">Mannitol-1-phosphate 5-dehydrogenase</fullName>
        <ecNumber evidence="1">1.1.1.17</ecNumber>
    </recommendedName>
</protein>